<organism>
    <name type="scientific">Escherichia coli O6:H1 (strain CFT073 / ATCC 700928 / UPEC)</name>
    <dbReference type="NCBI Taxonomy" id="199310"/>
    <lineage>
        <taxon>Bacteria</taxon>
        <taxon>Pseudomonadati</taxon>
        <taxon>Pseudomonadota</taxon>
        <taxon>Gammaproteobacteria</taxon>
        <taxon>Enterobacterales</taxon>
        <taxon>Enterobacteriaceae</taxon>
        <taxon>Escherichia</taxon>
    </lineage>
</organism>
<accession>P68700</accession>
<accession>P00844</accession>
<comment type="function">
    <text evidence="2">F(1)F(0) ATP synthase produces ATP from ADP in the presence of a proton or sodium gradient. F-type ATPases consist of two structural domains, F(1) containing the extramembraneous catalytic core and F(0) containing the membrane proton channel, linked together by a central stalk and a peripheral stalk. During catalysis, ATP synthesis in the catalytic domain of F(1) is coupled via a rotary mechanism of the central stalk subunits to proton translocation.</text>
</comment>
<comment type="function">
    <text evidence="2">Key component of the F(0) channel; it plays a direct role in translocation across the membrane. A homomeric c-ring of between 10-14 subunits forms the central stalk rotor element with the F(1) delta and epsilon subunits.</text>
</comment>
<comment type="subunit">
    <text evidence="2">F-type ATPases have 2 components, F(1) - the catalytic core - and F(0) - the membrane proton channel. F(1) has five subunits: alpha(3), beta(3), gamma(1), delta(1), epsilon(1). F(0) has three main subunits: a(1), b(2) and c(10-14). The alpha and beta chains form an alternating ring which encloses part of the gamma chain. F(1) is attached to F(0) by a central stalk formed by the gamma and epsilon chains, while a peripheral stalk is formed by the delta and b chains.</text>
</comment>
<comment type="subcellular location">
    <subcellularLocation>
        <location evidence="2">Cell inner membrane</location>
        <topology evidence="2">Multi-pass membrane protein</topology>
    </subcellularLocation>
</comment>
<comment type="miscellaneous">
    <text evidence="1">Dicyclohexylcarbodiimide (DCDD) binding to the active aspartate residue inhibits ATPase in vitro.</text>
</comment>
<comment type="similarity">
    <text evidence="2">Belongs to the ATPase C chain family.</text>
</comment>
<feature type="chain" id="PRO_0000112145" description="ATP synthase subunit c">
    <location>
        <begin position="1"/>
        <end position="79"/>
    </location>
</feature>
<feature type="transmembrane region" description="Helical" evidence="2">
    <location>
        <begin position="11"/>
        <end position="31"/>
    </location>
</feature>
<feature type="transmembrane region" description="Helical" evidence="2">
    <location>
        <begin position="53"/>
        <end position="73"/>
    </location>
</feature>
<feature type="site" description="Reversibly protonated during proton transport" evidence="2">
    <location>
        <position position="61"/>
    </location>
</feature>
<feature type="modified residue" description="N-formylmethionine" evidence="1">
    <location>
        <position position="1"/>
    </location>
</feature>
<name>ATPL_ECOL6</name>
<keyword id="KW-0066">ATP synthesis</keyword>
<keyword id="KW-0997">Cell inner membrane</keyword>
<keyword id="KW-1003">Cell membrane</keyword>
<keyword id="KW-0138">CF(0)</keyword>
<keyword id="KW-0291">Formylation</keyword>
<keyword id="KW-0375">Hydrogen ion transport</keyword>
<keyword id="KW-0406">Ion transport</keyword>
<keyword id="KW-0446">Lipid-binding</keyword>
<keyword id="KW-0472">Membrane</keyword>
<keyword id="KW-1185">Reference proteome</keyword>
<keyword id="KW-0812">Transmembrane</keyword>
<keyword id="KW-1133">Transmembrane helix</keyword>
<keyword id="KW-0813">Transport</keyword>
<reference key="1">
    <citation type="journal article" date="2002" name="Proc. Natl. Acad. Sci. U.S.A.">
        <title>Extensive mosaic structure revealed by the complete genome sequence of uropathogenic Escherichia coli.</title>
        <authorList>
            <person name="Welch R.A."/>
            <person name="Burland V."/>
            <person name="Plunkett G. III"/>
            <person name="Redford P."/>
            <person name="Roesch P."/>
            <person name="Rasko D."/>
            <person name="Buckles E.L."/>
            <person name="Liou S.-R."/>
            <person name="Boutin A."/>
            <person name="Hackett J."/>
            <person name="Stroud D."/>
            <person name="Mayhew G.F."/>
            <person name="Rose D.J."/>
            <person name="Zhou S."/>
            <person name="Schwartz D.C."/>
            <person name="Perna N.T."/>
            <person name="Mobley H.L.T."/>
            <person name="Donnenberg M.S."/>
            <person name="Blattner F.R."/>
        </authorList>
    </citation>
    <scope>NUCLEOTIDE SEQUENCE [LARGE SCALE GENOMIC DNA]</scope>
    <source>
        <strain>CFT073 / ATCC 700928 / UPEC</strain>
    </source>
</reference>
<evidence type="ECO:0000250" key="1"/>
<evidence type="ECO:0000255" key="2">
    <source>
        <dbReference type="HAMAP-Rule" id="MF_01396"/>
    </source>
</evidence>
<sequence>MENLNMDLLYMAAAVMMGLAAIGAAIGIGILGGKFLEGAARQPDLIPLLRTQFFIVMGLVDAIPMIAVGLGLYVMFAVA</sequence>
<protein>
    <recommendedName>
        <fullName evidence="2">ATP synthase subunit c</fullName>
    </recommendedName>
    <alternativeName>
        <fullName evidence="2">ATP synthase F(0) sector subunit c</fullName>
    </alternativeName>
    <alternativeName>
        <fullName evidence="2">F-type ATPase subunit c</fullName>
        <shortName evidence="2">F-ATPase subunit c</shortName>
    </alternativeName>
    <alternativeName>
        <fullName evidence="2">Lipid-binding protein</fullName>
    </alternativeName>
</protein>
<dbReference type="EMBL" id="AE014075">
    <property type="protein sequence ID" value="AAN83097.1"/>
    <property type="molecule type" value="Genomic_DNA"/>
</dbReference>
<dbReference type="RefSeq" id="WP_000429386.1">
    <property type="nucleotide sequence ID" value="NZ_CP051263.1"/>
</dbReference>
<dbReference type="SMR" id="P68700"/>
<dbReference type="STRING" id="199310.c4665"/>
<dbReference type="GeneID" id="98390858"/>
<dbReference type="KEGG" id="ecc:c4665"/>
<dbReference type="eggNOG" id="ENOG5032S3K">
    <property type="taxonomic scope" value="Bacteria"/>
</dbReference>
<dbReference type="HOGENOM" id="CLU_148047_1_0_6"/>
<dbReference type="BioCyc" id="ECOL199310:C4665-MONOMER"/>
<dbReference type="Proteomes" id="UP000001410">
    <property type="component" value="Chromosome"/>
</dbReference>
<dbReference type="GO" id="GO:0005886">
    <property type="term" value="C:plasma membrane"/>
    <property type="evidence" value="ECO:0007669"/>
    <property type="project" value="UniProtKB-SubCell"/>
</dbReference>
<dbReference type="GO" id="GO:0045259">
    <property type="term" value="C:proton-transporting ATP synthase complex"/>
    <property type="evidence" value="ECO:0007669"/>
    <property type="project" value="UniProtKB-KW"/>
</dbReference>
<dbReference type="GO" id="GO:0033177">
    <property type="term" value="C:proton-transporting two-sector ATPase complex, proton-transporting domain"/>
    <property type="evidence" value="ECO:0007669"/>
    <property type="project" value="InterPro"/>
</dbReference>
<dbReference type="GO" id="GO:0008289">
    <property type="term" value="F:lipid binding"/>
    <property type="evidence" value="ECO:0007669"/>
    <property type="project" value="UniProtKB-KW"/>
</dbReference>
<dbReference type="GO" id="GO:0046933">
    <property type="term" value="F:proton-transporting ATP synthase activity, rotational mechanism"/>
    <property type="evidence" value="ECO:0007669"/>
    <property type="project" value="UniProtKB-UniRule"/>
</dbReference>
<dbReference type="CDD" id="cd18185">
    <property type="entry name" value="ATP-synt_Fo_c_ATPE"/>
    <property type="match status" value="1"/>
</dbReference>
<dbReference type="FunFam" id="1.20.20.10:FF:000002">
    <property type="entry name" value="ATP synthase subunit c"/>
    <property type="match status" value="1"/>
</dbReference>
<dbReference type="Gene3D" id="1.20.20.10">
    <property type="entry name" value="F1F0 ATP synthase subunit C"/>
    <property type="match status" value="1"/>
</dbReference>
<dbReference type="HAMAP" id="MF_01396">
    <property type="entry name" value="ATP_synth_c_bact"/>
    <property type="match status" value="1"/>
</dbReference>
<dbReference type="InterPro" id="IPR005953">
    <property type="entry name" value="ATP_synth_csu_bac/chlpt"/>
</dbReference>
<dbReference type="InterPro" id="IPR000454">
    <property type="entry name" value="ATP_synth_F0_csu"/>
</dbReference>
<dbReference type="InterPro" id="IPR020537">
    <property type="entry name" value="ATP_synth_F0_csu_DDCD_BS"/>
</dbReference>
<dbReference type="InterPro" id="IPR038662">
    <property type="entry name" value="ATP_synth_F0_csu_sf"/>
</dbReference>
<dbReference type="InterPro" id="IPR002379">
    <property type="entry name" value="ATPase_proteolipid_c-like_dom"/>
</dbReference>
<dbReference type="InterPro" id="IPR035921">
    <property type="entry name" value="F/V-ATP_Csub_sf"/>
</dbReference>
<dbReference type="NCBIfam" id="TIGR01260">
    <property type="entry name" value="ATP_synt_c"/>
    <property type="match status" value="1"/>
</dbReference>
<dbReference type="NCBIfam" id="NF005363">
    <property type="entry name" value="PRK06876.1"/>
    <property type="match status" value="1"/>
</dbReference>
<dbReference type="Pfam" id="PF00137">
    <property type="entry name" value="ATP-synt_C"/>
    <property type="match status" value="1"/>
</dbReference>
<dbReference type="PRINTS" id="PR00124">
    <property type="entry name" value="ATPASEC"/>
</dbReference>
<dbReference type="SUPFAM" id="SSF81333">
    <property type="entry name" value="F1F0 ATP synthase subunit C"/>
    <property type="match status" value="1"/>
</dbReference>
<dbReference type="PROSITE" id="PS00605">
    <property type="entry name" value="ATPASE_C"/>
    <property type="match status" value="1"/>
</dbReference>
<gene>
    <name evidence="2" type="primary">atpE</name>
    <name type="ordered locus">c4665</name>
</gene>
<proteinExistence type="inferred from homology"/>